<reference key="1">
    <citation type="submission" date="2007-06" db="EMBL/GenBank/DDBJ databases">
        <title>Complete sequence of Sinorhizobium medicae WSM419 chromosome.</title>
        <authorList>
            <consortium name="US DOE Joint Genome Institute"/>
            <person name="Copeland A."/>
            <person name="Lucas S."/>
            <person name="Lapidus A."/>
            <person name="Barry K."/>
            <person name="Glavina del Rio T."/>
            <person name="Dalin E."/>
            <person name="Tice H."/>
            <person name="Pitluck S."/>
            <person name="Chain P."/>
            <person name="Malfatti S."/>
            <person name="Shin M."/>
            <person name="Vergez L."/>
            <person name="Schmutz J."/>
            <person name="Larimer F."/>
            <person name="Land M."/>
            <person name="Hauser L."/>
            <person name="Kyrpides N."/>
            <person name="Mikhailova N."/>
            <person name="Reeve W.G."/>
            <person name="Richardson P."/>
        </authorList>
    </citation>
    <scope>NUCLEOTIDE SEQUENCE [LARGE SCALE GENOMIC DNA]</scope>
    <source>
        <strain>WSM419</strain>
    </source>
</reference>
<dbReference type="EC" id="5.3.1.9" evidence="1"/>
<dbReference type="EMBL" id="CP000738">
    <property type="protein sequence ID" value="ABR61295.1"/>
    <property type="molecule type" value="Genomic_DNA"/>
</dbReference>
<dbReference type="RefSeq" id="WP_012066686.1">
    <property type="nucleotide sequence ID" value="NC_009636.1"/>
</dbReference>
<dbReference type="RefSeq" id="YP_001328130.1">
    <property type="nucleotide sequence ID" value="NC_009636.1"/>
</dbReference>
<dbReference type="SMR" id="A6UCB5"/>
<dbReference type="STRING" id="366394.Smed_2463"/>
<dbReference type="KEGG" id="smd:Smed_2463"/>
<dbReference type="PATRIC" id="fig|366394.8.peg.5649"/>
<dbReference type="eggNOG" id="COG2140">
    <property type="taxonomic scope" value="Bacteria"/>
</dbReference>
<dbReference type="HOGENOM" id="CLU_105797_0_0_5"/>
<dbReference type="OrthoDB" id="5592106at2"/>
<dbReference type="UniPathway" id="UPA00109">
    <property type="reaction ID" value="UER00181"/>
</dbReference>
<dbReference type="Proteomes" id="UP000001108">
    <property type="component" value="Chromosome"/>
</dbReference>
<dbReference type="GO" id="GO:0005737">
    <property type="term" value="C:cytoplasm"/>
    <property type="evidence" value="ECO:0007669"/>
    <property type="project" value="UniProtKB-SubCell"/>
</dbReference>
<dbReference type="GO" id="GO:0004347">
    <property type="term" value="F:glucose-6-phosphate isomerase activity"/>
    <property type="evidence" value="ECO:0007669"/>
    <property type="project" value="UniProtKB-UniRule"/>
</dbReference>
<dbReference type="GO" id="GO:0005506">
    <property type="term" value="F:iron ion binding"/>
    <property type="evidence" value="ECO:0007669"/>
    <property type="project" value="InterPro"/>
</dbReference>
<dbReference type="GO" id="GO:0006094">
    <property type="term" value="P:gluconeogenesis"/>
    <property type="evidence" value="ECO:0007669"/>
    <property type="project" value="UniProtKB-UniRule"/>
</dbReference>
<dbReference type="GO" id="GO:0006096">
    <property type="term" value="P:glycolytic process"/>
    <property type="evidence" value="ECO:0007669"/>
    <property type="project" value="UniProtKB-UniRule"/>
</dbReference>
<dbReference type="CDD" id="cd02218">
    <property type="entry name" value="cupin_PGI"/>
    <property type="match status" value="1"/>
</dbReference>
<dbReference type="Gene3D" id="2.60.120.10">
    <property type="entry name" value="Jelly Rolls"/>
    <property type="match status" value="1"/>
</dbReference>
<dbReference type="HAMAP" id="MF_01410">
    <property type="entry name" value="G6P_isomerase_arch"/>
    <property type="match status" value="1"/>
</dbReference>
<dbReference type="InterPro" id="IPR016758">
    <property type="entry name" value="G6P_isomerase_archaea/bacteria"/>
</dbReference>
<dbReference type="InterPro" id="IPR010551">
    <property type="entry name" value="G6P_isomerase_prok"/>
</dbReference>
<dbReference type="InterPro" id="IPR014710">
    <property type="entry name" value="RmlC-like_jellyroll"/>
</dbReference>
<dbReference type="InterPro" id="IPR011051">
    <property type="entry name" value="RmlC_Cupin_sf"/>
</dbReference>
<dbReference type="Pfam" id="PF06560">
    <property type="entry name" value="GPI"/>
    <property type="match status" value="1"/>
</dbReference>
<dbReference type="PIRSF" id="PIRSF019325">
    <property type="entry name" value="Glucose-6-phosphate_isomerase"/>
    <property type="match status" value="1"/>
</dbReference>
<dbReference type="SUPFAM" id="SSF51182">
    <property type="entry name" value="RmlC-like cupins"/>
    <property type="match status" value="1"/>
</dbReference>
<organism>
    <name type="scientific">Sinorhizobium medicae (strain WSM419)</name>
    <name type="common">Ensifer medicae</name>
    <dbReference type="NCBI Taxonomy" id="366394"/>
    <lineage>
        <taxon>Bacteria</taxon>
        <taxon>Pseudomonadati</taxon>
        <taxon>Pseudomonadota</taxon>
        <taxon>Alphaproteobacteria</taxon>
        <taxon>Hyphomicrobiales</taxon>
        <taxon>Rhizobiaceae</taxon>
        <taxon>Sinorhizobium/Ensifer group</taxon>
        <taxon>Sinorhizobium</taxon>
    </lineage>
</organism>
<keyword id="KW-0963">Cytoplasm</keyword>
<keyword id="KW-0312">Gluconeogenesis</keyword>
<keyword id="KW-0324">Glycolysis</keyword>
<keyword id="KW-0408">Iron</keyword>
<keyword id="KW-0413">Isomerase</keyword>
<keyword id="KW-0479">Metal-binding</keyword>
<protein>
    <recommendedName>
        <fullName evidence="1">Glucose-6-phosphate isomerase</fullName>
        <shortName evidence="1">GPI</shortName>
        <ecNumber evidence="1">5.3.1.9</ecNumber>
    </recommendedName>
    <alternativeName>
        <fullName evidence="1">Phosphoglucose isomerase</fullName>
        <shortName evidence="1">PGI</shortName>
    </alternativeName>
    <alternativeName>
        <fullName evidence="1">Phosphohexose isomerase</fullName>
        <shortName evidence="1">PHI</shortName>
    </alternativeName>
</protein>
<evidence type="ECO:0000255" key="1">
    <source>
        <dbReference type="HAMAP-Rule" id="MF_01410"/>
    </source>
</evidence>
<name>GPI_SINMW</name>
<accession>A6UCB5</accession>
<comment type="catalytic activity">
    <reaction evidence="1">
        <text>alpha-D-glucose 6-phosphate = beta-D-fructose 6-phosphate</text>
        <dbReference type="Rhea" id="RHEA:11816"/>
        <dbReference type="ChEBI" id="CHEBI:57634"/>
        <dbReference type="ChEBI" id="CHEBI:58225"/>
        <dbReference type="EC" id="5.3.1.9"/>
    </reaction>
</comment>
<comment type="pathway">
    <text evidence="1">Carbohydrate degradation; glycolysis; D-glyceraldehyde 3-phosphate and glycerone phosphate from D-glucose: step 2/4.</text>
</comment>
<comment type="subunit">
    <text evidence="1">Homodimer.</text>
</comment>
<comment type="subcellular location">
    <subcellularLocation>
        <location evidence="1">Cytoplasm</location>
    </subcellularLocation>
</comment>
<comment type="similarity">
    <text evidence="1">Belongs to the archaeal-type GPI family.</text>
</comment>
<gene>
    <name evidence="1" type="primary">pgiA</name>
    <name type="ordered locus">Smed_2463</name>
</gene>
<sequence length="214" mass="23911">MTKLFEPAACQVDLRTGAMSAATGAYQKRFRDLAGLYADEAAFSAMRENWNDTVVYEVSEFRPNERSGDLIFGTTRMLPGKVGDEYFVTRGHIHRQSDRPEIYYGQKGSGLMLLESPEGEVRIVAIDARTVCYVPPYWIHRSVNIGGEELVMLFCYPADSGQDYDCIAKAGGMRVRIVDDGEGGWKQVDNSSWRKRDAATIAALYGLEKKEKSA</sequence>
<feature type="chain" id="PRO_1000068451" description="Glucose-6-phosphate isomerase">
    <location>
        <begin position="1"/>
        <end position="214"/>
    </location>
</feature>
<feature type="binding site" evidence="1">
    <location>
        <position position="92"/>
    </location>
    <ligand>
        <name>Fe cation</name>
        <dbReference type="ChEBI" id="CHEBI:24875"/>
    </ligand>
</feature>
<feature type="binding site" evidence="1">
    <location>
        <position position="94"/>
    </location>
    <ligand>
        <name>Fe cation</name>
        <dbReference type="ChEBI" id="CHEBI:24875"/>
    </ligand>
</feature>
<feature type="binding site" evidence="1">
    <location>
        <position position="101"/>
    </location>
    <ligand>
        <name>Fe cation</name>
        <dbReference type="ChEBI" id="CHEBI:24875"/>
    </ligand>
</feature>
<feature type="binding site" evidence="1">
    <location>
        <position position="140"/>
    </location>
    <ligand>
        <name>Fe cation</name>
        <dbReference type="ChEBI" id="CHEBI:24875"/>
    </ligand>
</feature>
<proteinExistence type="inferred from homology"/>